<keyword id="KW-0067">ATP-binding</keyword>
<keyword id="KW-0418">Kinase</keyword>
<keyword id="KW-0545">Nucleotide biosynthesis</keyword>
<keyword id="KW-0547">Nucleotide-binding</keyword>
<keyword id="KW-0808">Transferase</keyword>
<sequence>MKGKFISFEGIDGCGKTTQIKFLEEYLLKQGYNILVLREPGGTKVGEKVRDILLDKNNFISPVTEMLLYASSRAQLVEEKILPAIEEGKIVLLDRFVDSSYVYQGYARGLGIEKVKVVNEIATMGILPDVTIYIDITPEEAMKRRGKREADRLERESWDFHKKVREGYIKLVKEFPKRFVFIDGMQELMKVHKDIIDVVKKYL</sequence>
<gene>
    <name evidence="1" type="primary">tmk</name>
    <name type="ordered locus">Teth514_0053</name>
</gene>
<protein>
    <recommendedName>
        <fullName evidence="1">Thymidylate kinase</fullName>
        <ecNumber evidence="1">2.7.4.9</ecNumber>
    </recommendedName>
    <alternativeName>
        <fullName evidence="1">dTMP kinase</fullName>
    </alternativeName>
</protein>
<organism>
    <name type="scientific">Thermoanaerobacter sp. (strain X514)</name>
    <dbReference type="NCBI Taxonomy" id="399726"/>
    <lineage>
        <taxon>Bacteria</taxon>
        <taxon>Bacillati</taxon>
        <taxon>Bacillota</taxon>
        <taxon>Clostridia</taxon>
        <taxon>Thermoanaerobacterales</taxon>
        <taxon>Thermoanaerobacteraceae</taxon>
        <taxon>Thermoanaerobacter</taxon>
    </lineage>
</organism>
<proteinExistence type="inferred from homology"/>
<dbReference type="EC" id="2.7.4.9" evidence="1"/>
<dbReference type="EMBL" id="CP000923">
    <property type="protein sequence ID" value="ABY91376.1"/>
    <property type="molecule type" value="Genomic_DNA"/>
</dbReference>
<dbReference type="RefSeq" id="WP_003867356.1">
    <property type="nucleotide sequence ID" value="NC_010320.1"/>
</dbReference>
<dbReference type="SMR" id="B0K119"/>
<dbReference type="KEGG" id="tex:Teth514_0053"/>
<dbReference type="HOGENOM" id="CLU_049131_0_2_9"/>
<dbReference type="Proteomes" id="UP000002155">
    <property type="component" value="Chromosome"/>
</dbReference>
<dbReference type="GO" id="GO:0005829">
    <property type="term" value="C:cytosol"/>
    <property type="evidence" value="ECO:0007669"/>
    <property type="project" value="TreeGrafter"/>
</dbReference>
<dbReference type="GO" id="GO:0005524">
    <property type="term" value="F:ATP binding"/>
    <property type="evidence" value="ECO:0007669"/>
    <property type="project" value="UniProtKB-UniRule"/>
</dbReference>
<dbReference type="GO" id="GO:0004798">
    <property type="term" value="F:dTMP kinase activity"/>
    <property type="evidence" value="ECO:0007669"/>
    <property type="project" value="UniProtKB-UniRule"/>
</dbReference>
<dbReference type="GO" id="GO:0006233">
    <property type="term" value="P:dTDP biosynthetic process"/>
    <property type="evidence" value="ECO:0007669"/>
    <property type="project" value="InterPro"/>
</dbReference>
<dbReference type="GO" id="GO:0006235">
    <property type="term" value="P:dTTP biosynthetic process"/>
    <property type="evidence" value="ECO:0007669"/>
    <property type="project" value="UniProtKB-UniRule"/>
</dbReference>
<dbReference type="GO" id="GO:0006227">
    <property type="term" value="P:dUDP biosynthetic process"/>
    <property type="evidence" value="ECO:0007669"/>
    <property type="project" value="TreeGrafter"/>
</dbReference>
<dbReference type="CDD" id="cd01672">
    <property type="entry name" value="TMPK"/>
    <property type="match status" value="1"/>
</dbReference>
<dbReference type="FunFam" id="3.40.50.300:FF:000225">
    <property type="entry name" value="Thymidylate kinase"/>
    <property type="match status" value="1"/>
</dbReference>
<dbReference type="Gene3D" id="3.40.50.300">
    <property type="entry name" value="P-loop containing nucleotide triphosphate hydrolases"/>
    <property type="match status" value="1"/>
</dbReference>
<dbReference type="HAMAP" id="MF_00165">
    <property type="entry name" value="Thymidylate_kinase"/>
    <property type="match status" value="1"/>
</dbReference>
<dbReference type="InterPro" id="IPR027417">
    <property type="entry name" value="P-loop_NTPase"/>
</dbReference>
<dbReference type="InterPro" id="IPR039430">
    <property type="entry name" value="Thymidylate_kin-like_dom"/>
</dbReference>
<dbReference type="InterPro" id="IPR018095">
    <property type="entry name" value="Thymidylate_kin_CS"/>
</dbReference>
<dbReference type="InterPro" id="IPR018094">
    <property type="entry name" value="Thymidylate_kinase"/>
</dbReference>
<dbReference type="NCBIfam" id="TIGR00041">
    <property type="entry name" value="DTMP_kinase"/>
    <property type="match status" value="1"/>
</dbReference>
<dbReference type="PANTHER" id="PTHR10344">
    <property type="entry name" value="THYMIDYLATE KINASE"/>
    <property type="match status" value="1"/>
</dbReference>
<dbReference type="PANTHER" id="PTHR10344:SF4">
    <property type="entry name" value="UMP-CMP KINASE 2, MITOCHONDRIAL"/>
    <property type="match status" value="1"/>
</dbReference>
<dbReference type="Pfam" id="PF02223">
    <property type="entry name" value="Thymidylate_kin"/>
    <property type="match status" value="1"/>
</dbReference>
<dbReference type="SUPFAM" id="SSF52540">
    <property type="entry name" value="P-loop containing nucleoside triphosphate hydrolases"/>
    <property type="match status" value="1"/>
</dbReference>
<dbReference type="PROSITE" id="PS01331">
    <property type="entry name" value="THYMIDYLATE_KINASE"/>
    <property type="match status" value="1"/>
</dbReference>
<name>KTHY_THEPX</name>
<feature type="chain" id="PRO_1000097441" description="Thymidylate kinase">
    <location>
        <begin position="1"/>
        <end position="203"/>
    </location>
</feature>
<feature type="binding site" evidence="1">
    <location>
        <begin position="10"/>
        <end position="17"/>
    </location>
    <ligand>
        <name>ATP</name>
        <dbReference type="ChEBI" id="CHEBI:30616"/>
    </ligand>
</feature>
<comment type="function">
    <text evidence="1">Phosphorylation of dTMP to form dTDP in both de novo and salvage pathways of dTTP synthesis.</text>
</comment>
<comment type="catalytic activity">
    <reaction evidence="1">
        <text>dTMP + ATP = dTDP + ADP</text>
        <dbReference type="Rhea" id="RHEA:13517"/>
        <dbReference type="ChEBI" id="CHEBI:30616"/>
        <dbReference type="ChEBI" id="CHEBI:58369"/>
        <dbReference type="ChEBI" id="CHEBI:63528"/>
        <dbReference type="ChEBI" id="CHEBI:456216"/>
        <dbReference type="EC" id="2.7.4.9"/>
    </reaction>
</comment>
<comment type="similarity">
    <text evidence="1">Belongs to the thymidylate kinase family.</text>
</comment>
<reference key="1">
    <citation type="submission" date="2008-01" db="EMBL/GenBank/DDBJ databases">
        <title>Complete sequence of Thermoanaerobacter sp. X514.</title>
        <authorList>
            <consortium name="US DOE Joint Genome Institute"/>
            <person name="Copeland A."/>
            <person name="Lucas S."/>
            <person name="Lapidus A."/>
            <person name="Barry K."/>
            <person name="Glavina del Rio T."/>
            <person name="Dalin E."/>
            <person name="Tice H."/>
            <person name="Pitluck S."/>
            <person name="Bruce D."/>
            <person name="Goodwin L."/>
            <person name="Saunders E."/>
            <person name="Brettin T."/>
            <person name="Detter J.C."/>
            <person name="Han C."/>
            <person name="Schmutz J."/>
            <person name="Larimer F."/>
            <person name="Land M."/>
            <person name="Hauser L."/>
            <person name="Kyrpides N."/>
            <person name="Kim E."/>
            <person name="Hemme C."/>
            <person name="Fields M.W."/>
            <person name="He Z."/>
            <person name="Zhou J."/>
            <person name="Richardson P."/>
        </authorList>
    </citation>
    <scope>NUCLEOTIDE SEQUENCE [LARGE SCALE GENOMIC DNA]</scope>
    <source>
        <strain>X514</strain>
    </source>
</reference>
<evidence type="ECO:0000255" key="1">
    <source>
        <dbReference type="HAMAP-Rule" id="MF_00165"/>
    </source>
</evidence>
<accession>B0K119</accession>